<organism>
    <name type="scientific">Mus musculus</name>
    <name type="common">Mouse</name>
    <dbReference type="NCBI Taxonomy" id="10090"/>
    <lineage>
        <taxon>Eukaryota</taxon>
        <taxon>Metazoa</taxon>
        <taxon>Chordata</taxon>
        <taxon>Craniata</taxon>
        <taxon>Vertebrata</taxon>
        <taxon>Euteleostomi</taxon>
        <taxon>Mammalia</taxon>
        <taxon>Eutheria</taxon>
        <taxon>Euarchontoglires</taxon>
        <taxon>Glires</taxon>
        <taxon>Rodentia</taxon>
        <taxon>Myomorpha</taxon>
        <taxon>Muroidea</taxon>
        <taxon>Muridae</taxon>
        <taxon>Murinae</taxon>
        <taxon>Mus</taxon>
        <taxon>Mus</taxon>
    </lineage>
</organism>
<reference key="1">
    <citation type="journal article" date="1993" name="Proc. Natl. Acad. Sci. U.S.A.">
        <title>A receptor for interleukin 10 is related to interferon receptors.</title>
        <authorList>
            <person name="Ho A.S.-Y."/>
            <person name="Liu Y."/>
            <person name="Khan T.A."/>
            <person name="Hsu D.-H."/>
            <person name="Bazan J.F."/>
            <person name="Moore K.W."/>
        </authorList>
    </citation>
    <scope>NUCLEOTIDE SEQUENCE [MRNA]</scope>
    <source>
        <strain>C57BL/6 X AJ F1</strain>
        <tissue>Hematopoietic</tissue>
    </source>
</reference>
<reference key="2">
    <citation type="journal article" date="1996" name="J. Biol. Chem.">
        <title>Stat3 recruitment by two distinct ligand-induced, tyrosine-phosphorylated docking sites in the interleukin-10 receptor intracellular domain.</title>
        <authorList>
            <person name="Weber-Nordt R.M."/>
            <person name="Riley J.K."/>
            <person name="Greenlund A.C."/>
            <person name="Moore K.W."/>
            <person name="Darnell J.E."/>
            <person name="Schreiber R.D."/>
        </authorList>
    </citation>
    <scope>FUNCTION</scope>
    <scope>INTERACTION WITH STAT3</scope>
    <scope>PHOSPHORYLATION AT TYR-443 AND TYR-493</scope>
    <scope>MUTAGENESIS OF TYR-443 AND TYR-493</scope>
</reference>
<protein>
    <recommendedName>
        <fullName>Interleukin-10 receptor subunit alpha</fullName>
        <shortName>IL-10 receptor subunit alpha</shortName>
        <shortName>IL-10R subunit alpha</shortName>
        <shortName>IL-10RA</shortName>
    </recommendedName>
    <alternativeName>
        <fullName>CDw210a</fullName>
    </alternativeName>
    <alternativeName>
        <fullName>Interleukin-10 receptor subunit 1</fullName>
        <shortName>IL-10R subunit 1</shortName>
        <shortName>IL-10R1</shortName>
    </alternativeName>
    <cdAntigenName>CD210</cdAntigenName>
</protein>
<evidence type="ECO:0000250" key="1">
    <source>
        <dbReference type="UniProtKB" id="Q13651"/>
    </source>
</evidence>
<evidence type="ECO:0000255" key="2"/>
<evidence type="ECO:0000269" key="3">
    <source>
    </source>
</evidence>
<evidence type="ECO:0000305" key="4"/>
<comment type="function">
    <text evidence="1 3">Cell surface receptor for the cytokine IL10 that participates in IL10-mediated anti-inflammatory functions, limiting excessive tissue disruption caused by inflammation. Upon binding to IL10, induces a conformational change in IL10RB, allowing IL10RB to bind IL10 as well. In turn, the heterotetrameric assembly complex, composed of two subunits of IL10RA and IL10RB, activates the kinases JAK1 and TYK2 that are constitutively associated with IL10RA and IL10RB respectively. These kinases then phosphorylate specific tyrosine residues in the intracellular domain in IL10RA leading to the recruitment and subsequent phosphorylation of STAT3 (PubMed:8910398). Once phosphorylated, STAT3 homodimerizes, translocates to the nucleus and activates the expression of anti-inflammatory genes. In addition, IL10RA-mediated activation of STAT3 inhibits starvation-induced autophagy (By similarity).</text>
</comment>
<comment type="subunit">
    <text evidence="1 3">Interacts with IL10. Interacts with IL10RB. Interacts (via its cytoplasmic domain) with JAK1 (via N-terminus). Interacts with BTRC; this interaction leads to IL10RA ubiquitination and subsequent degradation (By similarity). Interacts with STAT3 (PubMed:8910398).</text>
</comment>
<comment type="subcellular location">
    <subcellularLocation>
        <location evidence="1">Cell membrane</location>
        <topology evidence="1">Single-pass type I membrane protein</topology>
    </subcellularLocation>
    <subcellularLocation>
        <location evidence="1">Cytoplasm</location>
    </subcellularLocation>
</comment>
<comment type="PTM">
    <text evidence="3">Phosphorylated. Phosphorylation of the cytoplasmic tail induced STAT3 activation.</text>
</comment>
<comment type="PTM">
    <text evidence="1">Ubiquitinated by BTRC; ubiquitination leads to endocytosis and subsequent degradation of IL10RA.</text>
</comment>
<comment type="similarity">
    <text evidence="4">Belongs to the type II cytokine receptor family.</text>
</comment>
<name>I10R1_MOUSE</name>
<proteinExistence type="evidence at protein level"/>
<sequence length="575" mass="64248">MLSRLLPFLVTISSLSLEFIAYGTELPSPSYVWFEARFFQHILHWKPIPNQSESTYYEVALKQYGNSTWNDIHICRKAQALSCDLTTFTLDLYHRSYGYRARVRAVDNSQYSNWTTTETRFTVDEVILTVDSVTLKAMDGIIYGTIHPPRPTITPAGDEYEQVFKDLRVYKISIRKFSELKNATKRVKQETFTLTVPIGVRKFCVKVLPRLESRINKAEWSEEQCLLITTEQYFTVTNLSILVISMLLFCGILVCLVLQWYIRHPGKLPTVLVFKKPHDFFPANPLCPETPDAIHIVDLEVFPKVSLELRDSVLHGSTDSGFGSGKPSLQTEESQFLLPGSHPQIQGTLGKEESPGLQATCGDNTDSGICLQEPGLHSSMGPAWKQQLGYTHQDQDDSDVNLVQNSPGQPKYTQDASALGHVCLLEPKAPEEKDQVMVTFQGYQKQTRWKAEAAGPAECLDEEIPLTDAFDPELGVHLQDDLAWPPPALAAGYLKQESQGMASAPPGTPSRQWNQLTEEWSLLGVVSCEDLSIESWRFAHKLDPLDCGAAPGGLLDSLGSNLVTLPLISSLQVEE</sequence>
<dbReference type="EMBL" id="L12120">
    <property type="protein sequence ID" value="AAA16156.1"/>
    <property type="molecule type" value="mRNA"/>
</dbReference>
<dbReference type="CCDS" id="CCDS23131.1"/>
<dbReference type="PIR" id="A49667">
    <property type="entry name" value="A49667"/>
</dbReference>
<dbReference type="RefSeq" id="NP_032374.1">
    <property type="nucleotide sequence ID" value="NM_008348.3"/>
</dbReference>
<dbReference type="SMR" id="Q61727"/>
<dbReference type="DIP" id="DIP-247N"/>
<dbReference type="FunCoup" id="Q61727">
    <property type="interactions" value="744"/>
</dbReference>
<dbReference type="IntAct" id="Q61727">
    <property type="interactions" value="1"/>
</dbReference>
<dbReference type="STRING" id="10090.ENSMUSP00000034594"/>
<dbReference type="GlyCosmos" id="Q61727">
    <property type="glycosylation" value="5 sites, No reported glycans"/>
</dbReference>
<dbReference type="GlyGen" id="Q61727">
    <property type="glycosylation" value="6 sites"/>
</dbReference>
<dbReference type="iPTMnet" id="Q61727"/>
<dbReference type="PhosphoSitePlus" id="Q61727"/>
<dbReference type="PaxDb" id="10090-ENSMUSP00000034594"/>
<dbReference type="ProteomicsDB" id="273067"/>
<dbReference type="Antibodypedia" id="18560">
    <property type="antibodies" value="894 antibodies from 40 providers"/>
</dbReference>
<dbReference type="DNASU" id="16154"/>
<dbReference type="Ensembl" id="ENSMUST00000034594.16">
    <property type="protein sequence ID" value="ENSMUSP00000034594.10"/>
    <property type="gene ID" value="ENSMUSG00000032089.17"/>
</dbReference>
<dbReference type="GeneID" id="16154"/>
<dbReference type="KEGG" id="mmu:16154"/>
<dbReference type="UCSC" id="uc009pfn.1">
    <property type="organism name" value="mouse"/>
</dbReference>
<dbReference type="AGR" id="MGI:96538"/>
<dbReference type="CTD" id="3587"/>
<dbReference type="MGI" id="MGI:96538">
    <property type="gene designation" value="Il10ra"/>
</dbReference>
<dbReference type="VEuPathDB" id="HostDB:ENSMUSG00000032089"/>
<dbReference type="eggNOG" id="ENOG502S2PS">
    <property type="taxonomic scope" value="Eukaryota"/>
</dbReference>
<dbReference type="GeneTree" id="ENSGT00510000048847"/>
<dbReference type="HOGENOM" id="CLU_033904_0_0_1"/>
<dbReference type="InParanoid" id="Q61727"/>
<dbReference type="OMA" id="TGQWNQP"/>
<dbReference type="OrthoDB" id="9886749at2759"/>
<dbReference type="PhylomeDB" id="Q61727"/>
<dbReference type="TreeFam" id="TF334107"/>
<dbReference type="Reactome" id="R-MMU-6783783">
    <property type="pathway name" value="Interleukin-10 signaling"/>
</dbReference>
<dbReference type="BioGRID-ORCS" id="16154">
    <property type="hits" value="2 hits in 78 CRISPR screens"/>
</dbReference>
<dbReference type="ChiTaRS" id="Il10ra">
    <property type="organism name" value="mouse"/>
</dbReference>
<dbReference type="PRO" id="PR:Q61727"/>
<dbReference type="Proteomes" id="UP000000589">
    <property type="component" value="Chromosome 9"/>
</dbReference>
<dbReference type="RNAct" id="Q61727">
    <property type="molecule type" value="protein"/>
</dbReference>
<dbReference type="Bgee" id="ENSMUSG00000032089">
    <property type="expression patterns" value="Expressed in granulocyte and 63 other cell types or tissues"/>
</dbReference>
<dbReference type="ExpressionAtlas" id="Q61727">
    <property type="expression patterns" value="baseline and differential"/>
</dbReference>
<dbReference type="GO" id="GO:0016324">
    <property type="term" value="C:apical plasma membrane"/>
    <property type="evidence" value="ECO:0007669"/>
    <property type="project" value="Ensembl"/>
</dbReference>
<dbReference type="GO" id="GO:0005929">
    <property type="term" value="C:cilium"/>
    <property type="evidence" value="ECO:0007669"/>
    <property type="project" value="Ensembl"/>
</dbReference>
<dbReference type="GO" id="GO:0005829">
    <property type="term" value="C:cytosol"/>
    <property type="evidence" value="ECO:0007669"/>
    <property type="project" value="Ensembl"/>
</dbReference>
<dbReference type="GO" id="GO:0005654">
    <property type="term" value="C:nucleoplasm"/>
    <property type="evidence" value="ECO:0007669"/>
    <property type="project" value="Ensembl"/>
</dbReference>
<dbReference type="GO" id="GO:0004920">
    <property type="term" value="F:interleukin-10 receptor activity"/>
    <property type="evidence" value="ECO:0007669"/>
    <property type="project" value="Ensembl"/>
</dbReference>
<dbReference type="GO" id="GO:0140105">
    <property type="term" value="P:interleukin-10-mediated signaling pathway"/>
    <property type="evidence" value="ECO:0007669"/>
    <property type="project" value="Ensembl"/>
</dbReference>
<dbReference type="GO" id="GO:0060729">
    <property type="term" value="P:intestinal epithelial structure maintenance"/>
    <property type="evidence" value="ECO:0007669"/>
    <property type="project" value="Ensembl"/>
</dbReference>
<dbReference type="GO" id="GO:0010507">
    <property type="term" value="P:negative regulation of autophagy"/>
    <property type="evidence" value="ECO:0007669"/>
    <property type="project" value="Ensembl"/>
</dbReference>
<dbReference type="GO" id="GO:0050728">
    <property type="term" value="P:negative regulation of inflammatory response"/>
    <property type="evidence" value="ECO:0007669"/>
    <property type="project" value="Ensembl"/>
</dbReference>
<dbReference type="GO" id="GO:0046427">
    <property type="term" value="P:positive regulation of receptor signaling pathway via JAK-STAT"/>
    <property type="evidence" value="ECO:0007669"/>
    <property type="project" value="Ensembl"/>
</dbReference>
<dbReference type="GO" id="GO:0070086">
    <property type="term" value="P:ubiquitin-dependent endocytosis"/>
    <property type="evidence" value="ECO:0007669"/>
    <property type="project" value="Ensembl"/>
</dbReference>
<dbReference type="FunFam" id="2.60.40.10:FF:000348">
    <property type="entry name" value="Interleukin 20 receptor subunit alpha"/>
    <property type="match status" value="1"/>
</dbReference>
<dbReference type="FunFam" id="2.60.40.10:FF:001488">
    <property type="entry name" value="Interleukin-10 receptor subunit alpha"/>
    <property type="match status" value="1"/>
</dbReference>
<dbReference type="Gene3D" id="2.60.40.10">
    <property type="entry name" value="Immunoglobulins"/>
    <property type="match status" value="2"/>
</dbReference>
<dbReference type="InterPro" id="IPR003961">
    <property type="entry name" value="FN3_dom"/>
</dbReference>
<dbReference type="InterPro" id="IPR036116">
    <property type="entry name" value="FN3_sf"/>
</dbReference>
<dbReference type="InterPro" id="IPR013783">
    <property type="entry name" value="Ig-like_fold"/>
</dbReference>
<dbReference type="InterPro" id="IPR050650">
    <property type="entry name" value="Type-II_Cytokine-TF_Rcpt"/>
</dbReference>
<dbReference type="PANTHER" id="PTHR20859">
    <property type="entry name" value="INTERFERON/INTERLEUKIN RECEPTOR"/>
    <property type="match status" value="1"/>
</dbReference>
<dbReference type="PANTHER" id="PTHR20859:SF90">
    <property type="entry name" value="INTERLEUKIN-10 RECEPTOR SUBUNIT ALPHA"/>
    <property type="match status" value="1"/>
</dbReference>
<dbReference type="Pfam" id="PF01108">
    <property type="entry name" value="Tissue_fac"/>
    <property type="match status" value="1"/>
</dbReference>
<dbReference type="SUPFAM" id="SSF49265">
    <property type="entry name" value="Fibronectin type III"/>
    <property type="match status" value="2"/>
</dbReference>
<feature type="signal peptide" evidence="2">
    <location>
        <begin position="1"/>
        <end position="16"/>
    </location>
</feature>
<feature type="chain" id="PRO_0000011013" description="Interleukin-10 receptor subunit alpha">
    <location>
        <begin position="17"/>
        <end position="575"/>
    </location>
</feature>
<feature type="topological domain" description="Extracellular" evidence="2">
    <location>
        <begin position="17"/>
        <end position="241"/>
    </location>
</feature>
<feature type="transmembrane region" description="Helical" evidence="2">
    <location>
        <begin position="242"/>
        <end position="262"/>
    </location>
</feature>
<feature type="topological domain" description="Cytoplasmic" evidence="2">
    <location>
        <begin position="263"/>
        <end position="575"/>
    </location>
</feature>
<feature type="modified residue" description="Phosphotyrosine" evidence="3">
    <location>
        <position position="443"/>
    </location>
</feature>
<feature type="modified residue" description="Phosphotyrosine" evidence="3">
    <location>
        <position position="493"/>
    </location>
</feature>
<feature type="glycosylation site" description="N-linked (GlcNAc...) asparagine" evidence="2">
    <location>
        <position position="50"/>
    </location>
</feature>
<feature type="glycosylation site" description="N-linked (GlcNAc...) asparagine" evidence="2">
    <location>
        <position position="66"/>
    </location>
</feature>
<feature type="glycosylation site" description="N-linked (GlcNAc...) asparagine" evidence="2">
    <location>
        <position position="113"/>
    </location>
</feature>
<feature type="glycosylation site" description="N-linked (GlcNAc...) asparagine" evidence="2">
    <location>
        <position position="182"/>
    </location>
</feature>
<feature type="glycosylation site" description="N-linked (GlcNAc...) asparagine" evidence="2">
    <location>
        <position position="238"/>
    </location>
</feature>
<feature type="disulfide bond" evidence="2">
    <location>
        <begin position="204"/>
        <end position="225"/>
    </location>
</feature>
<feature type="mutagenesis site" description="Complete loss of STAT3 activation; in association with F-493." evidence="3">
    <original>Y</original>
    <variation>F</variation>
    <location>
        <position position="443"/>
    </location>
</feature>
<feature type="mutagenesis site" description="Complete loss of STAT3 activation; in association with F-443." evidence="3">
    <original>Y</original>
    <variation>F</variation>
    <location>
        <position position="493"/>
    </location>
</feature>
<accession>Q61727</accession>
<keyword id="KW-1003">Cell membrane</keyword>
<keyword id="KW-0963">Cytoplasm</keyword>
<keyword id="KW-1015">Disulfide bond</keyword>
<keyword id="KW-0325">Glycoprotein</keyword>
<keyword id="KW-0472">Membrane</keyword>
<keyword id="KW-0597">Phosphoprotein</keyword>
<keyword id="KW-0675">Receptor</keyword>
<keyword id="KW-1185">Reference proteome</keyword>
<keyword id="KW-0732">Signal</keyword>
<keyword id="KW-0812">Transmembrane</keyword>
<keyword id="KW-1133">Transmembrane helix</keyword>
<keyword id="KW-0832">Ubl conjugation</keyword>
<gene>
    <name type="primary">Il10ra</name>
    <name type="synonym">Il10r</name>
</gene>